<dbReference type="EMBL" id="CP001138">
    <property type="protein sequence ID" value="ACH50519.1"/>
    <property type="molecule type" value="Genomic_DNA"/>
</dbReference>
<dbReference type="RefSeq" id="WP_000500277.1">
    <property type="nucleotide sequence ID" value="NC_011149.1"/>
</dbReference>
<dbReference type="SMR" id="B5F6G4"/>
<dbReference type="KEGG" id="sea:SeAg_B1691"/>
<dbReference type="HOGENOM" id="CLU_133067_0_0_6"/>
<dbReference type="Proteomes" id="UP000008819">
    <property type="component" value="Chromosome"/>
</dbReference>
<dbReference type="GO" id="GO:0005886">
    <property type="term" value="C:plasma membrane"/>
    <property type="evidence" value="ECO:0007669"/>
    <property type="project" value="UniProtKB-SubCell"/>
</dbReference>
<dbReference type="GO" id="GO:0015199">
    <property type="term" value="F:amino-acid betaine transmembrane transporter activity"/>
    <property type="evidence" value="ECO:0007669"/>
    <property type="project" value="TreeGrafter"/>
</dbReference>
<dbReference type="GO" id="GO:0015297">
    <property type="term" value="F:antiporter activity"/>
    <property type="evidence" value="ECO:0007669"/>
    <property type="project" value="TreeGrafter"/>
</dbReference>
<dbReference type="GO" id="GO:0015220">
    <property type="term" value="F:choline transmembrane transporter activity"/>
    <property type="evidence" value="ECO:0007669"/>
    <property type="project" value="TreeGrafter"/>
</dbReference>
<dbReference type="GO" id="GO:0015606">
    <property type="term" value="F:spermidine transmembrane transporter activity"/>
    <property type="evidence" value="ECO:0007669"/>
    <property type="project" value="UniProtKB-UniRule"/>
</dbReference>
<dbReference type="GO" id="GO:0031460">
    <property type="term" value="P:glycine betaine transport"/>
    <property type="evidence" value="ECO:0007669"/>
    <property type="project" value="TreeGrafter"/>
</dbReference>
<dbReference type="FunFam" id="1.10.3730.20:FF:000001">
    <property type="entry name" value="Quaternary ammonium compound resistance transporter SugE"/>
    <property type="match status" value="1"/>
</dbReference>
<dbReference type="Gene3D" id="1.10.3730.20">
    <property type="match status" value="1"/>
</dbReference>
<dbReference type="HAMAP" id="MF_01598">
    <property type="entry name" value="MdtJ"/>
    <property type="match status" value="1"/>
</dbReference>
<dbReference type="InterPro" id="IPR000390">
    <property type="entry name" value="Small_drug/metabolite_transptr"/>
</dbReference>
<dbReference type="InterPro" id="IPR045324">
    <property type="entry name" value="Small_multidrug_res"/>
</dbReference>
<dbReference type="InterPro" id="IPR023740">
    <property type="entry name" value="Spermidine_export_MdtJ"/>
</dbReference>
<dbReference type="NCBIfam" id="NF007767">
    <property type="entry name" value="PRK10452.1"/>
    <property type="match status" value="1"/>
</dbReference>
<dbReference type="PANTHER" id="PTHR30561">
    <property type="entry name" value="SMR FAMILY PROTON-DEPENDENT DRUG EFFLUX TRANSPORTER SUGE"/>
    <property type="match status" value="1"/>
</dbReference>
<dbReference type="PANTHER" id="PTHR30561:SF2">
    <property type="entry name" value="SPERMIDINE EXPORT PROTEIN MDTJ"/>
    <property type="match status" value="1"/>
</dbReference>
<dbReference type="Pfam" id="PF00893">
    <property type="entry name" value="Multi_Drug_Res"/>
    <property type="match status" value="1"/>
</dbReference>
<dbReference type="SUPFAM" id="SSF103481">
    <property type="entry name" value="Multidrug resistance efflux transporter EmrE"/>
    <property type="match status" value="1"/>
</dbReference>
<evidence type="ECO:0000255" key="1">
    <source>
        <dbReference type="HAMAP-Rule" id="MF_01598"/>
    </source>
</evidence>
<accession>B5F6G4</accession>
<reference key="1">
    <citation type="journal article" date="2011" name="J. Bacteriol.">
        <title>Comparative genomics of 28 Salmonella enterica isolates: evidence for CRISPR-mediated adaptive sublineage evolution.</title>
        <authorList>
            <person name="Fricke W.F."/>
            <person name="Mammel M.K."/>
            <person name="McDermott P.F."/>
            <person name="Tartera C."/>
            <person name="White D.G."/>
            <person name="Leclerc J.E."/>
            <person name="Ravel J."/>
            <person name="Cebula T.A."/>
        </authorList>
    </citation>
    <scope>NUCLEOTIDE SEQUENCE [LARGE SCALE GENOMIC DNA]</scope>
    <source>
        <strain>SL483</strain>
    </source>
</reference>
<keyword id="KW-0997">Cell inner membrane</keyword>
<keyword id="KW-1003">Cell membrane</keyword>
<keyword id="KW-0472">Membrane</keyword>
<keyword id="KW-0812">Transmembrane</keyword>
<keyword id="KW-1133">Transmembrane helix</keyword>
<keyword id="KW-0813">Transport</keyword>
<protein>
    <recommendedName>
        <fullName evidence="1">Spermidine export protein MdtJ</fullName>
    </recommendedName>
</protein>
<proteinExistence type="inferred from homology"/>
<sequence>MFYWILLALAIATEITGTLSMKWASVGNGNAGFILMLVMITLSYIFLSFAVKKIALGVAYALWEGIGILFITIFSVLLFDEALSTMKIAGLLTLVAGIVLIKSGTRKPGKPVKEAARATI</sequence>
<feature type="chain" id="PRO_1000197335" description="Spermidine export protein MdtJ">
    <location>
        <begin position="1"/>
        <end position="120"/>
    </location>
</feature>
<feature type="transmembrane region" description="Helical" evidence="1">
    <location>
        <begin position="1"/>
        <end position="21"/>
    </location>
</feature>
<feature type="transmembrane region" description="Helical" evidence="1">
    <location>
        <begin position="31"/>
        <end position="51"/>
    </location>
</feature>
<feature type="transmembrane region" description="Helical" evidence="1">
    <location>
        <begin position="54"/>
        <end position="74"/>
    </location>
</feature>
<feature type="transmembrane region" description="Helical" evidence="1">
    <location>
        <begin position="81"/>
        <end position="101"/>
    </location>
</feature>
<organism>
    <name type="scientific">Salmonella agona (strain SL483)</name>
    <dbReference type="NCBI Taxonomy" id="454166"/>
    <lineage>
        <taxon>Bacteria</taxon>
        <taxon>Pseudomonadati</taxon>
        <taxon>Pseudomonadota</taxon>
        <taxon>Gammaproteobacteria</taxon>
        <taxon>Enterobacterales</taxon>
        <taxon>Enterobacteriaceae</taxon>
        <taxon>Salmonella</taxon>
    </lineage>
</organism>
<name>MDTJ_SALA4</name>
<gene>
    <name evidence="1" type="primary">mdtJ</name>
    <name type="ordered locus">SeAg_B1691</name>
</gene>
<comment type="function">
    <text evidence="1">Catalyzes the excretion of spermidine.</text>
</comment>
<comment type="subunit">
    <text evidence="1">Forms a complex with MdtI.</text>
</comment>
<comment type="subcellular location">
    <subcellularLocation>
        <location evidence="1">Cell inner membrane</location>
        <topology evidence="1">Multi-pass membrane protein</topology>
    </subcellularLocation>
</comment>
<comment type="similarity">
    <text evidence="1">Belongs to the drug/metabolite transporter (DMT) superfamily. Small multidrug resistance (SMR) (TC 2.A.7.1) family. MdtJ subfamily.</text>
</comment>